<comment type="function">
    <text evidence="1">The UvrABC repair system catalyzes the recognition and processing of DNA lesions. UvrC both incises the 5' and 3' sides of the lesion. The N-terminal half is responsible for the 3' incision and the C-terminal half is responsible for the 5' incision.</text>
</comment>
<comment type="subunit">
    <text evidence="1">Interacts with UvrB in an incision complex.</text>
</comment>
<comment type="subcellular location">
    <subcellularLocation>
        <location evidence="1">Cytoplasm</location>
    </subcellularLocation>
</comment>
<comment type="similarity">
    <text evidence="1">Belongs to the UvrC family.</text>
</comment>
<accession>C0M890</accession>
<dbReference type="EMBL" id="FM204883">
    <property type="protein sequence ID" value="CAW94194.1"/>
    <property type="molecule type" value="Genomic_DNA"/>
</dbReference>
<dbReference type="RefSeq" id="WP_012679702.1">
    <property type="nucleotide sequence ID" value="NC_012471.1"/>
</dbReference>
<dbReference type="SMR" id="C0M890"/>
<dbReference type="KEGG" id="seu:SEQ_1368"/>
<dbReference type="HOGENOM" id="CLU_014841_3_2_9"/>
<dbReference type="OrthoDB" id="9804933at2"/>
<dbReference type="Proteomes" id="UP000001365">
    <property type="component" value="Chromosome"/>
</dbReference>
<dbReference type="GO" id="GO:0005737">
    <property type="term" value="C:cytoplasm"/>
    <property type="evidence" value="ECO:0007669"/>
    <property type="project" value="UniProtKB-SubCell"/>
</dbReference>
<dbReference type="GO" id="GO:0009380">
    <property type="term" value="C:excinuclease repair complex"/>
    <property type="evidence" value="ECO:0007669"/>
    <property type="project" value="InterPro"/>
</dbReference>
<dbReference type="GO" id="GO:0003677">
    <property type="term" value="F:DNA binding"/>
    <property type="evidence" value="ECO:0007669"/>
    <property type="project" value="UniProtKB-UniRule"/>
</dbReference>
<dbReference type="GO" id="GO:0009381">
    <property type="term" value="F:excinuclease ABC activity"/>
    <property type="evidence" value="ECO:0007669"/>
    <property type="project" value="UniProtKB-UniRule"/>
</dbReference>
<dbReference type="GO" id="GO:0006289">
    <property type="term" value="P:nucleotide-excision repair"/>
    <property type="evidence" value="ECO:0007669"/>
    <property type="project" value="UniProtKB-UniRule"/>
</dbReference>
<dbReference type="GO" id="GO:0009432">
    <property type="term" value="P:SOS response"/>
    <property type="evidence" value="ECO:0007669"/>
    <property type="project" value="UniProtKB-UniRule"/>
</dbReference>
<dbReference type="CDD" id="cd10434">
    <property type="entry name" value="GIY-YIG_UvrC_Cho"/>
    <property type="match status" value="1"/>
</dbReference>
<dbReference type="FunFam" id="3.30.420.340:FF:000002">
    <property type="entry name" value="UvrABC system protein C"/>
    <property type="match status" value="1"/>
</dbReference>
<dbReference type="FunFam" id="3.40.1440.10:FF:000001">
    <property type="entry name" value="UvrABC system protein C"/>
    <property type="match status" value="1"/>
</dbReference>
<dbReference type="Gene3D" id="1.10.150.20">
    <property type="entry name" value="5' to 3' exonuclease, C-terminal subdomain"/>
    <property type="match status" value="1"/>
</dbReference>
<dbReference type="Gene3D" id="3.40.1440.10">
    <property type="entry name" value="GIY-YIG endonuclease"/>
    <property type="match status" value="1"/>
</dbReference>
<dbReference type="Gene3D" id="4.10.860.10">
    <property type="entry name" value="UVR domain"/>
    <property type="match status" value="1"/>
</dbReference>
<dbReference type="Gene3D" id="3.30.420.340">
    <property type="entry name" value="UvrC, RNAse H endonuclease domain"/>
    <property type="match status" value="1"/>
</dbReference>
<dbReference type="HAMAP" id="MF_00203">
    <property type="entry name" value="UvrC"/>
    <property type="match status" value="1"/>
</dbReference>
<dbReference type="InterPro" id="IPR000305">
    <property type="entry name" value="GIY-YIG_endonuc"/>
</dbReference>
<dbReference type="InterPro" id="IPR035901">
    <property type="entry name" value="GIY-YIG_endonuc_sf"/>
</dbReference>
<dbReference type="InterPro" id="IPR047296">
    <property type="entry name" value="GIY-YIG_UvrC_Cho"/>
</dbReference>
<dbReference type="InterPro" id="IPR010994">
    <property type="entry name" value="RuvA_2-like"/>
</dbReference>
<dbReference type="InterPro" id="IPR001943">
    <property type="entry name" value="UVR_dom"/>
</dbReference>
<dbReference type="InterPro" id="IPR036876">
    <property type="entry name" value="UVR_dom_sf"/>
</dbReference>
<dbReference type="InterPro" id="IPR050066">
    <property type="entry name" value="UvrABC_protein_C"/>
</dbReference>
<dbReference type="InterPro" id="IPR004791">
    <property type="entry name" value="UvrC"/>
</dbReference>
<dbReference type="InterPro" id="IPR001162">
    <property type="entry name" value="UvrC_RNase_H_dom"/>
</dbReference>
<dbReference type="InterPro" id="IPR038476">
    <property type="entry name" value="UvrC_RNase_H_dom_sf"/>
</dbReference>
<dbReference type="NCBIfam" id="TIGR00194">
    <property type="entry name" value="uvrC"/>
    <property type="match status" value="1"/>
</dbReference>
<dbReference type="PANTHER" id="PTHR30562:SF1">
    <property type="entry name" value="UVRABC SYSTEM PROTEIN C"/>
    <property type="match status" value="1"/>
</dbReference>
<dbReference type="PANTHER" id="PTHR30562">
    <property type="entry name" value="UVRC/OXIDOREDUCTASE"/>
    <property type="match status" value="1"/>
</dbReference>
<dbReference type="Pfam" id="PF01541">
    <property type="entry name" value="GIY-YIG"/>
    <property type="match status" value="1"/>
</dbReference>
<dbReference type="Pfam" id="PF02151">
    <property type="entry name" value="UVR"/>
    <property type="match status" value="1"/>
</dbReference>
<dbReference type="Pfam" id="PF22920">
    <property type="entry name" value="UvrC_RNaseH"/>
    <property type="match status" value="1"/>
</dbReference>
<dbReference type="Pfam" id="PF08459">
    <property type="entry name" value="UvrC_RNaseH_dom"/>
    <property type="match status" value="1"/>
</dbReference>
<dbReference type="SMART" id="SM00465">
    <property type="entry name" value="GIYc"/>
    <property type="match status" value="1"/>
</dbReference>
<dbReference type="SUPFAM" id="SSF46600">
    <property type="entry name" value="C-terminal UvrC-binding domain of UvrB"/>
    <property type="match status" value="1"/>
</dbReference>
<dbReference type="SUPFAM" id="SSF82771">
    <property type="entry name" value="GIY-YIG endonuclease"/>
    <property type="match status" value="1"/>
</dbReference>
<dbReference type="SUPFAM" id="SSF47781">
    <property type="entry name" value="RuvA domain 2-like"/>
    <property type="match status" value="1"/>
</dbReference>
<dbReference type="PROSITE" id="PS50164">
    <property type="entry name" value="GIY_YIG"/>
    <property type="match status" value="1"/>
</dbReference>
<dbReference type="PROSITE" id="PS50151">
    <property type="entry name" value="UVR"/>
    <property type="match status" value="1"/>
</dbReference>
<dbReference type="PROSITE" id="PS50165">
    <property type="entry name" value="UVRC"/>
    <property type="match status" value="1"/>
</dbReference>
<sequence length="594" mass="68218">MNELIKHKLELLPDSPGCYLHKDKAGTIIYVGKAKNLRNRVRSYFRGSHDTKTELLVSEIADFEFIVTGSNTEALLLEINLIQENMPKYNIKLKDDKSYPFIKITNEPFPRLLITRQIKKNDGLYFGPYPDAYTATEVKKLLDRIFPFKKCKNPVNKVCFYYHLGQCQAHTICHTDKAYWDSLVADVKQFLNGKDDKIIDDLRSKMLEASHNQEFERAAEYRDLISGIATMRTKQRVMSKDLQDRDIFGYFVDKGWMCVQVFFVRQGKLIQRDVNMFPYYNEAEEDFLTYVGQFYSDQRHLIPKEVFIPETIDETLVAAIVPARIVKPQRGEKKQLVALATKNARVSLQQKFDLLEKDLRKTSGAIEHLGQLLGIEKPVRIEAFDNSNIQGTSPVAAMVVFVDGKPSKKDYRKFKIKTVIGPDDYASMREVIYRRYSRVKHEGLQAPDLIIVDGGQGQVKAARDVIEHQLGLSIPVAGLQKNDKHQTHELLFGNPLAVVELPRNSEEFFLLHRIQDEVHRFAITFHRQVRSKNAFSSKLDHIAGLGPKRKQLLLKRFKSMTALEQASLEEIQQLGIPKTVAEALFDHLTSKSEV</sequence>
<organism>
    <name type="scientific">Streptococcus equi subsp. equi (strain 4047)</name>
    <dbReference type="NCBI Taxonomy" id="553482"/>
    <lineage>
        <taxon>Bacteria</taxon>
        <taxon>Bacillati</taxon>
        <taxon>Bacillota</taxon>
        <taxon>Bacilli</taxon>
        <taxon>Lactobacillales</taxon>
        <taxon>Streptococcaceae</taxon>
        <taxon>Streptococcus</taxon>
    </lineage>
</organism>
<gene>
    <name evidence="1" type="primary">uvrC</name>
    <name type="ordered locus">SEQ_1368</name>
</gene>
<protein>
    <recommendedName>
        <fullName evidence="1">UvrABC system protein C</fullName>
        <shortName evidence="1">Protein UvrC</shortName>
    </recommendedName>
    <alternativeName>
        <fullName evidence="1">Excinuclease ABC subunit C</fullName>
    </alternativeName>
</protein>
<proteinExistence type="inferred from homology"/>
<keyword id="KW-0963">Cytoplasm</keyword>
<keyword id="KW-0227">DNA damage</keyword>
<keyword id="KW-0228">DNA excision</keyword>
<keyword id="KW-0234">DNA repair</keyword>
<keyword id="KW-0267">Excision nuclease</keyword>
<keyword id="KW-0742">SOS response</keyword>
<name>UVRC_STRE4</name>
<feature type="chain" id="PRO_1000200601" description="UvrABC system protein C">
    <location>
        <begin position="1"/>
        <end position="594"/>
    </location>
</feature>
<feature type="domain" description="GIY-YIG" evidence="1">
    <location>
        <begin position="14"/>
        <end position="91"/>
    </location>
</feature>
<feature type="domain" description="UVR" evidence="1">
    <location>
        <begin position="196"/>
        <end position="231"/>
    </location>
</feature>
<evidence type="ECO:0000255" key="1">
    <source>
        <dbReference type="HAMAP-Rule" id="MF_00203"/>
    </source>
</evidence>
<reference key="1">
    <citation type="journal article" date="2009" name="PLoS Pathog.">
        <title>Genomic evidence for the evolution of Streptococcus equi: host restriction, increased virulence, and genetic exchange with human pathogens.</title>
        <authorList>
            <person name="Holden M.T.G."/>
            <person name="Heather Z."/>
            <person name="Paillot R."/>
            <person name="Steward K.F."/>
            <person name="Webb K."/>
            <person name="Ainslie F."/>
            <person name="Jourdan T."/>
            <person name="Bason N.C."/>
            <person name="Holroyd N.E."/>
            <person name="Mungall K."/>
            <person name="Quail M.A."/>
            <person name="Sanders M."/>
            <person name="Simmonds M."/>
            <person name="Willey D."/>
            <person name="Brooks K."/>
            <person name="Aanensen D.M."/>
            <person name="Spratt B.G."/>
            <person name="Jolley K.A."/>
            <person name="Maiden M.C.J."/>
            <person name="Kehoe M."/>
            <person name="Chanter N."/>
            <person name="Bentley S.D."/>
            <person name="Robinson C."/>
            <person name="Maskell D.J."/>
            <person name="Parkhill J."/>
            <person name="Waller A.S."/>
        </authorList>
    </citation>
    <scope>NUCLEOTIDE SEQUENCE [LARGE SCALE GENOMIC DNA]</scope>
    <source>
        <strain>4047</strain>
    </source>
</reference>